<sequence length="32" mass="3101">SLGGFLKGVGKALAGVGKVVADQFGNLLQAGQ</sequence>
<comment type="function">
    <text evidence="1">Antimicrobial peptide.</text>
</comment>
<comment type="subcellular location">
    <subcellularLocation>
        <location evidence="3">Secreted</location>
    </subcellularLocation>
</comment>
<comment type="tissue specificity">
    <text evidence="3">Expressed by the skin glands.</text>
</comment>
<comment type="mass spectrometry" mass="3098.0" method="MALDI" evidence="3"/>
<comment type="similarity">
    <text evidence="2">Belongs to the frog skin active peptide (FSAP) family. Dermatoxin subfamily.</text>
</comment>
<keyword id="KW-0027">Amidation</keyword>
<keyword id="KW-0878">Amphibian defense peptide</keyword>
<keyword id="KW-0929">Antimicrobial</keyword>
<keyword id="KW-0903">Direct protein sequencing</keyword>
<keyword id="KW-0964">Secreted</keyword>
<evidence type="ECO:0000250" key="1">
    <source>
        <dbReference type="UniProtKB" id="P84928"/>
    </source>
</evidence>
<evidence type="ECO:0000255" key="2"/>
<evidence type="ECO:0000269" key="3">
    <source>
    </source>
</evidence>
<evidence type="ECO:0000303" key="4">
    <source>
    </source>
</evidence>
<protein>
    <recommendedName>
        <fullName evidence="4">Dermatoxin-J1</fullName>
        <shortName evidence="4">DRT-J1</shortName>
    </recommendedName>
</protein>
<reference key="1">
    <citation type="journal article" date="2011" name="Toxicon">
        <title>Peptidomic dissection of the skin secretion of Phasmahyla jandaia (Bokermann and Sazima, 1978) (Anura, Hylidae, Phyllomedusinae).</title>
        <authorList>
            <person name="Rates B."/>
            <person name="Silva L.P."/>
            <person name="Ireno I.C."/>
            <person name="Leite F.S."/>
            <person name="Borges M.H."/>
            <person name="Bloch C. Jr."/>
            <person name="De Lima M.E."/>
            <person name="Pimenta A.M."/>
        </authorList>
    </citation>
    <scope>PROTEIN SEQUENCE</scope>
    <scope>SUBCELLULAR LOCATION</scope>
    <scope>TISSUE SPECIFICITY</scope>
    <scope>MASS SPECTROMETRY</scope>
    <scope>AMIDATION AT GLN-32</scope>
    <source>
        <tissue>Skin secretion</tissue>
    </source>
</reference>
<organism>
    <name type="scientific">Phasmahyla jandaia</name>
    <name type="common">Jandaia leaf frog</name>
    <name type="synonym">Phyllomedusa jandaia</name>
    <dbReference type="NCBI Taxonomy" id="762504"/>
    <lineage>
        <taxon>Eukaryota</taxon>
        <taxon>Metazoa</taxon>
        <taxon>Chordata</taxon>
        <taxon>Craniata</taxon>
        <taxon>Vertebrata</taxon>
        <taxon>Euteleostomi</taxon>
        <taxon>Amphibia</taxon>
        <taxon>Batrachia</taxon>
        <taxon>Anura</taxon>
        <taxon>Neobatrachia</taxon>
        <taxon>Hyloidea</taxon>
        <taxon>Hylidae</taxon>
        <taxon>Phyllomedusinae</taxon>
        <taxon>Phasmahyla</taxon>
    </lineage>
</organism>
<feature type="peptide" id="PRO_0000404607" description="Dermatoxin-J1" evidence="3">
    <location>
        <begin position="1"/>
        <end position="32"/>
    </location>
</feature>
<feature type="modified residue" description="Glutamine amide" evidence="3">
    <location>
        <position position="32"/>
    </location>
</feature>
<feature type="unsure residue" description="L or I" evidence="3">
    <location>
        <position position="2"/>
    </location>
</feature>
<feature type="unsure residue" description="L or I" evidence="3">
    <location>
        <position position="6"/>
    </location>
</feature>
<feature type="unsure residue" description="K or Q" evidence="3">
    <location>
        <position position="7"/>
    </location>
</feature>
<feature type="unsure residue" description="K or Q" evidence="3">
    <location>
        <position position="11"/>
    </location>
</feature>
<feature type="unsure residue" description="L or I" evidence="3">
    <location>
        <position position="13"/>
    </location>
</feature>
<feature type="unsure residue" description="K or Q" evidence="3">
    <location>
        <position position="18"/>
    </location>
</feature>
<feature type="unsure residue" description="Q or K" evidence="3">
    <location>
        <position position="23"/>
    </location>
</feature>
<feature type="unsure residue" description="L or I" evidence="3">
    <location>
        <position position="27"/>
    </location>
</feature>
<feature type="unsure residue" description="L or I" evidence="3">
    <location>
        <position position="28"/>
    </location>
</feature>
<feature type="unsure residue" description="Q or K" evidence="3">
    <location>
        <position position="29"/>
    </location>
</feature>
<feature type="unsure residue" description="Q or K" evidence="3">
    <location>
        <position position="32"/>
    </location>
</feature>
<accession>P86621</accession>
<proteinExistence type="evidence at protein level"/>
<dbReference type="SMR" id="P86621"/>
<dbReference type="GO" id="GO:0005576">
    <property type="term" value="C:extracellular region"/>
    <property type="evidence" value="ECO:0007669"/>
    <property type="project" value="UniProtKB-SubCell"/>
</dbReference>
<dbReference type="GO" id="GO:0006952">
    <property type="term" value="P:defense response"/>
    <property type="evidence" value="ECO:0007669"/>
    <property type="project" value="UniProtKB-KW"/>
</dbReference>
<name>DRT1_PHAJA</name>